<comment type="function">
    <text evidence="1">Catalyzes the attachment of serine to tRNA(Ser). Is also able to aminoacylate tRNA(Sec) with serine, to form the misacylated tRNA L-seryl-tRNA(Sec), which will be further converted into selenocysteinyl-tRNA(Sec).</text>
</comment>
<comment type="catalytic activity">
    <reaction evidence="1">
        <text>tRNA(Ser) + L-serine + ATP = L-seryl-tRNA(Ser) + AMP + diphosphate + H(+)</text>
        <dbReference type="Rhea" id="RHEA:12292"/>
        <dbReference type="Rhea" id="RHEA-COMP:9669"/>
        <dbReference type="Rhea" id="RHEA-COMP:9703"/>
        <dbReference type="ChEBI" id="CHEBI:15378"/>
        <dbReference type="ChEBI" id="CHEBI:30616"/>
        <dbReference type="ChEBI" id="CHEBI:33019"/>
        <dbReference type="ChEBI" id="CHEBI:33384"/>
        <dbReference type="ChEBI" id="CHEBI:78442"/>
        <dbReference type="ChEBI" id="CHEBI:78533"/>
        <dbReference type="ChEBI" id="CHEBI:456215"/>
        <dbReference type="EC" id="6.1.1.11"/>
    </reaction>
</comment>
<comment type="catalytic activity">
    <reaction evidence="1">
        <text>tRNA(Sec) + L-serine + ATP = L-seryl-tRNA(Sec) + AMP + diphosphate + H(+)</text>
        <dbReference type="Rhea" id="RHEA:42580"/>
        <dbReference type="Rhea" id="RHEA-COMP:9742"/>
        <dbReference type="Rhea" id="RHEA-COMP:10128"/>
        <dbReference type="ChEBI" id="CHEBI:15378"/>
        <dbReference type="ChEBI" id="CHEBI:30616"/>
        <dbReference type="ChEBI" id="CHEBI:33019"/>
        <dbReference type="ChEBI" id="CHEBI:33384"/>
        <dbReference type="ChEBI" id="CHEBI:78442"/>
        <dbReference type="ChEBI" id="CHEBI:78533"/>
        <dbReference type="ChEBI" id="CHEBI:456215"/>
        <dbReference type="EC" id="6.1.1.11"/>
    </reaction>
</comment>
<comment type="pathway">
    <text evidence="1">Aminoacyl-tRNA biosynthesis; selenocysteinyl-tRNA(Sec) biosynthesis; L-seryl-tRNA(Sec) from L-serine and tRNA(Sec): step 1/1.</text>
</comment>
<comment type="subunit">
    <text evidence="1">Homodimer. The tRNA molecule binds across the dimer.</text>
</comment>
<comment type="subcellular location">
    <subcellularLocation>
        <location evidence="1">Cytoplasm</location>
    </subcellularLocation>
</comment>
<comment type="domain">
    <text evidence="1">Consists of two distinct domains, a catalytic core and a N-terminal extension that is involved in tRNA binding.</text>
</comment>
<comment type="similarity">
    <text evidence="1">Belongs to the class-II aminoacyl-tRNA synthetase family. Type-1 seryl-tRNA synthetase subfamily.</text>
</comment>
<accession>Q2YNM6</accession>
<reference key="1">
    <citation type="journal article" date="2005" name="Infect. Immun.">
        <title>Whole-genome analyses of speciation events in pathogenic Brucellae.</title>
        <authorList>
            <person name="Chain P.S."/>
            <person name="Comerci D.J."/>
            <person name="Tolmasky M.E."/>
            <person name="Larimer F.W."/>
            <person name="Malfatti S.A."/>
            <person name="Vergez L.M."/>
            <person name="Aguero F."/>
            <person name="Land M.L."/>
            <person name="Ugalde R.A."/>
            <person name="Garcia E."/>
        </authorList>
    </citation>
    <scope>NUCLEOTIDE SEQUENCE [LARGE SCALE GENOMIC DNA]</scope>
    <source>
        <strain>2308</strain>
    </source>
</reference>
<evidence type="ECO:0000255" key="1">
    <source>
        <dbReference type="HAMAP-Rule" id="MF_00176"/>
    </source>
</evidence>
<organism>
    <name type="scientific">Brucella abortus (strain 2308)</name>
    <dbReference type="NCBI Taxonomy" id="359391"/>
    <lineage>
        <taxon>Bacteria</taxon>
        <taxon>Pseudomonadati</taxon>
        <taxon>Pseudomonadota</taxon>
        <taxon>Alphaproteobacteria</taxon>
        <taxon>Hyphomicrobiales</taxon>
        <taxon>Brucellaceae</taxon>
        <taxon>Brucella/Ochrobactrum group</taxon>
        <taxon>Brucella</taxon>
    </lineage>
</organism>
<gene>
    <name evidence="1" type="primary">serS</name>
    <name type="ordered locus">BAB1_0904</name>
</gene>
<sequence>MLDIKWIRENPETLDKALAKRGAAPLSSELIALDEKRREHVGKVQAAQERRNAASKEIGKAMAAKDMGTAEKLKAEVGELKDFLAHAEEDERRLSKELSDALSTIPNIPLDDVPLGKDESDNVELRRIGNPHNFSFQPKEHFELGEALGYMDFERAAKLAGARFTVLKGPLARLERALGQFMLDLHTTEHGYTEVMPPLMVRDEAVYGTGQLPKFSEDLFRTTDGRWLIPTAEVPLTNLVAEEIVDMKGLPLRFTALTPCFRSEAGSAGRDTRGMLRQHQFLKVEMVSITDAESSVAEHERMTACAEEVLKRLGLPFRTVVLCTGDMGFGAQRTYDIEVWLPGQNTYREISSCSTCGDFQGRRMNARYRPEGEKSTRFVHTLNGSGVAVGRALIAVMENYQQEDGSIHIPEALQPYMGGLTRIEKAA</sequence>
<proteinExistence type="inferred from homology"/>
<name>SYS_BRUA2</name>
<feature type="chain" id="PRO_1000019625" description="Serine--tRNA ligase">
    <location>
        <begin position="1"/>
        <end position="427"/>
    </location>
</feature>
<feature type="binding site" evidence="1">
    <location>
        <begin position="231"/>
        <end position="233"/>
    </location>
    <ligand>
        <name>L-serine</name>
        <dbReference type="ChEBI" id="CHEBI:33384"/>
    </ligand>
</feature>
<feature type="binding site" evidence="1">
    <location>
        <begin position="262"/>
        <end position="264"/>
    </location>
    <ligand>
        <name>ATP</name>
        <dbReference type="ChEBI" id="CHEBI:30616"/>
    </ligand>
</feature>
<feature type="binding site" evidence="1">
    <location>
        <position position="285"/>
    </location>
    <ligand>
        <name>L-serine</name>
        <dbReference type="ChEBI" id="CHEBI:33384"/>
    </ligand>
</feature>
<feature type="binding site" evidence="1">
    <location>
        <begin position="349"/>
        <end position="352"/>
    </location>
    <ligand>
        <name>ATP</name>
        <dbReference type="ChEBI" id="CHEBI:30616"/>
    </ligand>
</feature>
<feature type="binding site" evidence="1">
    <location>
        <position position="385"/>
    </location>
    <ligand>
        <name>L-serine</name>
        <dbReference type="ChEBI" id="CHEBI:33384"/>
    </ligand>
</feature>
<keyword id="KW-0030">Aminoacyl-tRNA synthetase</keyword>
<keyword id="KW-0067">ATP-binding</keyword>
<keyword id="KW-0963">Cytoplasm</keyword>
<keyword id="KW-0436">Ligase</keyword>
<keyword id="KW-0547">Nucleotide-binding</keyword>
<keyword id="KW-0648">Protein biosynthesis</keyword>
<keyword id="KW-1185">Reference proteome</keyword>
<dbReference type="EC" id="6.1.1.11" evidence="1"/>
<dbReference type="EMBL" id="AM040264">
    <property type="protein sequence ID" value="CAJ10860.1"/>
    <property type="molecule type" value="Genomic_DNA"/>
</dbReference>
<dbReference type="RefSeq" id="WP_002964015.1">
    <property type="nucleotide sequence ID" value="NZ_KN046823.1"/>
</dbReference>
<dbReference type="SMR" id="Q2YNM6"/>
<dbReference type="STRING" id="359391.BAB1_0904"/>
<dbReference type="GeneID" id="97533819"/>
<dbReference type="KEGG" id="bmf:BAB1_0904"/>
<dbReference type="PATRIC" id="fig|359391.11.peg.3212"/>
<dbReference type="HOGENOM" id="CLU_023797_1_1_5"/>
<dbReference type="PhylomeDB" id="Q2YNM6"/>
<dbReference type="UniPathway" id="UPA00906">
    <property type="reaction ID" value="UER00895"/>
</dbReference>
<dbReference type="Proteomes" id="UP000002719">
    <property type="component" value="Chromosome I"/>
</dbReference>
<dbReference type="GO" id="GO:0005737">
    <property type="term" value="C:cytoplasm"/>
    <property type="evidence" value="ECO:0007669"/>
    <property type="project" value="UniProtKB-SubCell"/>
</dbReference>
<dbReference type="GO" id="GO:0005524">
    <property type="term" value="F:ATP binding"/>
    <property type="evidence" value="ECO:0007669"/>
    <property type="project" value="UniProtKB-UniRule"/>
</dbReference>
<dbReference type="GO" id="GO:0004828">
    <property type="term" value="F:serine-tRNA ligase activity"/>
    <property type="evidence" value="ECO:0007669"/>
    <property type="project" value="UniProtKB-UniRule"/>
</dbReference>
<dbReference type="GO" id="GO:0016260">
    <property type="term" value="P:selenocysteine biosynthetic process"/>
    <property type="evidence" value="ECO:0007669"/>
    <property type="project" value="UniProtKB-UniRule"/>
</dbReference>
<dbReference type="GO" id="GO:0006434">
    <property type="term" value="P:seryl-tRNA aminoacylation"/>
    <property type="evidence" value="ECO:0007669"/>
    <property type="project" value="UniProtKB-UniRule"/>
</dbReference>
<dbReference type="CDD" id="cd00770">
    <property type="entry name" value="SerRS_core"/>
    <property type="match status" value="1"/>
</dbReference>
<dbReference type="Gene3D" id="3.30.930.10">
    <property type="entry name" value="Bira Bifunctional Protein, Domain 2"/>
    <property type="match status" value="1"/>
</dbReference>
<dbReference type="Gene3D" id="1.10.287.40">
    <property type="entry name" value="Serine-tRNA synthetase, tRNA binding domain"/>
    <property type="match status" value="1"/>
</dbReference>
<dbReference type="HAMAP" id="MF_00176">
    <property type="entry name" value="Ser_tRNA_synth_type1"/>
    <property type="match status" value="1"/>
</dbReference>
<dbReference type="InterPro" id="IPR002314">
    <property type="entry name" value="aa-tRNA-synt_IIb"/>
</dbReference>
<dbReference type="InterPro" id="IPR006195">
    <property type="entry name" value="aa-tRNA-synth_II"/>
</dbReference>
<dbReference type="InterPro" id="IPR045864">
    <property type="entry name" value="aa-tRNA-synth_II/BPL/LPL"/>
</dbReference>
<dbReference type="InterPro" id="IPR002317">
    <property type="entry name" value="Ser-tRNA-ligase_type_1"/>
</dbReference>
<dbReference type="InterPro" id="IPR015866">
    <property type="entry name" value="Ser-tRNA-synth_1_N"/>
</dbReference>
<dbReference type="InterPro" id="IPR042103">
    <property type="entry name" value="SerRS_1_N_sf"/>
</dbReference>
<dbReference type="InterPro" id="IPR033729">
    <property type="entry name" value="SerRS_core"/>
</dbReference>
<dbReference type="InterPro" id="IPR010978">
    <property type="entry name" value="tRNA-bd_arm"/>
</dbReference>
<dbReference type="NCBIfam" id="TIGR00414">
    <property type="entry name" value="serS"/>
    <property type="match status" value="1"/>
</dbReference>
<dbReference type="PANTHER" id="PTHR43697:SF1">
    <property type="entry name" value="SERINE--TRNA LIGASE"/>
    <property type="match status" value="1"/>
</dbReference>
<dbReference type="PANTHER" id="PTHR43697">
    <property type="entry name" value="SERYL-TRNA SYNTHETASE"/>
    <property type="match status" value="1"/>
</dbReference>
<dbReference type="Pfam" id="PF02403">
    <property type="entry name" value="Seryl_tRNA_N"/>
    <property type="match status" value="1"/>
</dbReference>
<dbReference type="Pfam" id="PF00587">
    <property type="entry name" value="tRNA-synt_2b"/>
    <property type="match status" value="1"/>
</dbReference>
<dbReference type="PIRSF" id="PIRSF001529">
    <property type="entry name" value="Ser-tRNA-synth_IIa"/>
    <property type="match status" value="1"/>
</dbReference>
<dbReference type="PRINTS" id="PR00981">
    <property type="entry name" value="TRNASYNTHSER"/>
</dbReference>
<dbReference type="SUPFAM" id="SSF55681">
    <property type="entry name" value="Class II aaRS and biotin synthetases"/>
    <property type="match status" value="1"/>
</dbReference>
<dbReference type="SUPFAM" id="SSF46589">
    <property type="entry name" value="tRNA-binding arm"/>
    <property type="match status" value="1"/>
</dbReference>
<dbReference type="PROSITE" id="PS50862">
    <property type="entry name" value="AA_TRNA_LIGASE_II"/>
    <property type="match status" value="1"/>
</dbReference>
<protein>
    <recommendedName>
        <fullName evidence="1">Serine--tRNA ligase</fullName>
        <ecNumber evidence="1">6.1.1.11</ecNumber>
    </recommendedName>
    <alternativeName>
        <fullName evidence="1">Seryl-tRNA synthetase</fullName>
        <shortName evidence="1">SerRS</shortName>
    </alternativeName>
    <alternativeName>
        <fullName evidence="1">Seryl-tRNA(Ser/Sec) synthetase</fullName>
    </alternativeName>
</protein>